<protein>
    <recommendedName>
        <fullName evidence="1">Non-structural protein 5</fullName>
        <shortName evidence="1">NSP5</shortName>
    </recommendedName>
    <alternativeName>
        <fullName evidence="1">NS26</fullName>
    </alternativeName>
</protein>
<proteinExistence type="inferred from homology"/>
<name>NSP5_ROTHT</name>
<accession>B3SRX3</accession>
<comment type="function">
    <text evidence="1">Plays an essential role in the viral genome replication. Participates, together with NSP2, in the formation of viral factories (viroplasms), which are large inclusions in the host cytoplasm where replication intermediates are assembled and viral RNA replication takes place. Orchestrates the recruitment of viroplasmic proteins such as capsid proteins to these factories. Participates in the selective exclusion of host proteins from stress granules (SG) and P bodies (PB). Also participates in the sequestration of these remodeled organelles in viral factories.</text>
</comment>
<comment type="cofactor">
    <cofactor evidence="1">
        <name>Mg(2+)</name>
        <dbReference type="ChEBI" id="CHEBI:18420"/>
    </cofactor>
</comment>
<comment type="subunit">
    <text evidence="1">Homodimer. Interacts with VP1. Interacts with VP2. Interacts with NSP2; this interaction leads to up-regulation of NSP5 hyperphosphorylation and formation of virus factories. Interacts with NSP6. Participates in the selective exclusion of host proteins from stress granules (SG) and P bodies (PB). Also participates in the sequestration of these remodeled organelles in viral factories.</text>
</comment>
<comment type="subcellular location">
    <subcellularLocation>
        <location evidence="1">Host cytoplasm</location>
    </subcellularLocation>
    <text evidence="1">Found in spherical cytoplasmic structures, called virus factories, that appear early after infection and are the site of viral replication and packaging.</text>
</comment>
<comment type="PTM">
    <text evidence="1">O-glycosylated.</text>
</comment>
<comment type="PTM">
    <text evidence="1">Hyperphosphorylated on serine residues, when in dimeric form. Phosphorylation by host CK1 is required for the hyperphosphorylation of NSP5 dimer.</text>
</comment>
<comment type="similarity">
    <text evidence="1">Belongs to the rotavirus NSP5 family.</text>
</comment>
<keyword id="KW-0325">Glycoprotein</keyword>
<keyword id="KW-1035">Host cytoplasm</keyword>
<keyword id="KW-0460">Magnesium</keyword>
<keyword id="KW-0479">Metal-binding</keyword>
<keyword id="KW-0547">Nucleotide-binding</keyword>
<keyword id="KW-0597">Phosphoprotein</keyword>
<keyword id="KW-0694">RNA-binding</keyword>
<organism>
    <name type="scientific">Rotavirus A (strain RVA/Human/United Kingdom/ST3/1975/G4P2A[6])</name>
    <name type="common">RV-A</name>
    <name type="synonym">Rotavirus A (strain St. Thomas 3)</name>
    <dbReference type="NCBI Taxonomy" id="10960"/>
    <lineage>
        <taxon>Viruses</taxon>
        <taxon>Riboviria</taxon>
        <taxon>Orthornavirae</taxon>
        <taxon>Duplornaviricota</taxon>
        <taxon>Resentoviricetes</taxon>
        <taxon>Reovirales</taxon>
        <taxon>Sedoreoviridae</taxon>
        <taxon>Rotavirus</taxon>
        <taxon>Rotavirus A</taxon>
    </lineage>
</organism>
<sequence>MSLSIDVTSLPSISSSIFKNESSSTTSTLSGKSIGRSEQYISPDAEAFNKYMLSKSPEDIGPSDSASNDPLTSFSIRSNAVKTNADAGVSMDSSTQSRPSSNVGCDQLDFSLTKGINVSANLDSCISISTDHKKEKSKKDKSRKYYPKIEADSDSEDYVLDDSDSDDGKCKNCKYKKKYFVLRMRMKQVAMQLIEDL</sequence>
<feature type="chain" id="PRO_0000369504" description="Non-structural protein 5">
    <location>
        <begin position="1"/>
        <end position="197"/>
    </location>
</feature>
<feature type="region of interest" description="Disordered" evidence="2">
    <location>
        <begin position="17"/>
        <end position="37"/>
    </location>
</feature>
<feature type="region of interest" description="Disordered" evidence="2">
    <location>
        <begin position="53"/>
        <end position="72"/>
    </location>
</feature>
<feature type="compositionally biased region" description="Low complexity" evidence="2">
    <location>
        <begin position="17"/>
        <end position="30"/>
    </location>
</feature>
<feature type="binding site" evidence="1">
    <location>
        <position position="92"/>
    </location>
    <ligand>
        <name>Mg(2+)</name>
        <dbReference type="ChEBI" id="CHEBI:18420"/>
    </ligand>
</feature>
<feature type="modified residue" description="Phosphoserine; by host CK1" evidence="1">
    <location>
        <position position="67"/>
    </location>
</feature>
<feature type="modified residue" description="Phosphoserine; by host" evidence="1">
    <location>
        <position position="153"/>
    </location>
</feature>
<feature type="modified residue" description="Phosphoserine; by host" evidence="1">
    <location>
        <position position="155"/>
    </location>
</feature>
<feature type="modified residue" description="Phosphoserine; by host" evidence="1">
    <location>
        <position position="163"/>
    </location>
</feature>
<feature type="modified residue" description="Phosphoserine; by host" evidence="1">
    <location>
        <position position="165"/>
    </location>
</feature>
<reference key="1">
    <citation type="journal article" date="2008" name="J. Virol.">
        <title>Group A human rotavirus genomics: evidence that gene constellations are influenced by viral protein interactions.</title>
        <authorList>
            <person name="Heiman E.M."/>
            <person name="McDonald S.M."/>
            <person name="Barro M."/>
            <person name="Taraporewala Z.F."/>
            <person name="Bar-Magen T."/>
            <person name="Patton J.T."/>
        </authorList>
    </citation>
    <scope>NUCLEOTIDE SEQUENCE [GENOMIC RNA]</scope>
</reference>
<evidence type="ECO:0000255" key="1">
    <source>
        <dbReference type="HAMAP-Rule" id="MF_04092"/>
    </source>
</evidence>
<evidence type="ECO:0000256" key="2">
    <source>
        <dbReference type="SAM" id="MobiDB-lite"/>
    </source>
</evidence>
<organismHost>
    <name type="scientific">Homo sapiens</name>
    <name type="common">Human</name>
    <dbReference type="NCBI Taxonomy" id="9606"/>
</organismHost>
<dbReference type="EMBL" id="EF672618">
    <property type="protein sequence ID" value="ABV53298.1"/>
    <property type="molecule type" value="Genomic_RNA"/>
</dbReference>
<dbReference type="Proteomes" id="UP000007048">
    <property type="component" value="Genome"/>
</dbReference>
<dbReference type="GO" id="GO:0030430">
    <property type="term" value="C:host cell cytoplasm"/>
    <property type="evidence" value="ECO:0007669"/>
    <property type="project" value="UniProtKB-SubCell"/>
</dbReference>
<dbReference type="GO" id="GO:0016887">
    <property type="term" value="F:ATP hydrolysis activity"/>
    <property type="evidence" value="ECO:0007669"/>
    <property type="project" value="UniProtKB-UniRule"/>
</dbReference>
<dbReference type="GO" id="GO:0000287">
    <property type="term" value="F:magnesium ion binding"/>
    <property type="evidence" value="ECO:0007669"/>
    <property type="project" value="UniProtKB-UniRule"/>
</dbReference>
<dbReference type="GO" id="GO:0000166">
    <property type="term" value="F:nucleotide binding"/>
    <property type="evidence" value="ECO:0007669"/>
    <property type="project" value="UniProtKB-UniRule"/>
</dbReference>
<dbReference type="GO" id="GO:0003723">
    <property type="term" value="F:RNA binding"/>
    <property type="evidence" value="ECO:0007669"/>
    <property type="project" value="UniProtKB-UniRule"/>
</dbReference>
<dbReference type="GO" id="GO:0019079">
    <property type="term" value="P:viral genome replication"/>
    <property type="evidence" value="ECO:0007669"/>
    <property type="project" value="UniProtKB-UniRule"/>
</dbReference>
<dbReference type="HAMAP" id="MF_04092">
    <property type="entry name" value="ROTA_NSP5"/>
    <property type="match status" value="1"/>
</dbReference>
<dbReference type="InterPro" id="IPR002512">
    <property type="entry name" value="Rotavirus_A/C_NSP5"/>
</dbReference>
<dbReference type="Pfam" id="PF01525">
    <property type="entry name" value="Rota_NS26"/>
    <property type="match status" value="2"/>
</dbReference>
<dbReference type="PIRSF" id="PIRSF004006">
    <property type="entry name" value="Rota_NS26"/>
    <property type="match status" value="1"/>
</dbReference>